<accession>A4VWU8</accession>
<gene>
    <name evidence="1" type="primary">metK</name>
    <name type="ordered locus">SSU05_1621</name>
</gene>
<feature type="chain" id="PRO_0000302993" description="S-adenosylmethionine synthase">
    <location>
        <begin position="1"/>
        <end position="396"/>
    </location>
</feature>
<feature type="region of interest" description="Flexible loop" evidence="1">
    <location>
        <begin position="100"/>
        <end position="110"/>
    </location>
</feature>
<feature type="binding site" description="in other chain" evidence="1">
    <location>
        <position position="16"/>
    </location>
    <ligand>
        <name>ATP</name>
        <dbReference type="ChEBI" id="CHEBI:30616"/>
        <note>ligand shared between two neighboring subunits</note>
    </ligand>
</feature>
<feature type="binding site" evidence="1">
    <location>
        <position position="18"/>
    </location>
    <ligand>
        <name>Mg(2+)</name>
        <dbReference type="ChEBI" id="CHEBI:18420"/>
    </ligand>
</feature>
<feature type="binding site" evidence="1">
    <location>
        <position position="44"/>
    </location>
    <ligand>
        <name>K(+)</name>
        <dbReference type="ChEBI" id="CHEBI:29103"/>
    </ligand>
</feature>
<feature type="binding site" description="in other chain" evidence="1">
    <location>
        <position position="57"/>
    </location>
    <ligand>
        <name>L-methionine</name>
        <dbReference type="ChEBI" id="CHEBI:57844"/>
        <note>ligand shared between two neighboring subunits</note>
    </ligand>
</feature>
<feature type="binding site" description="in other chain" evidence="1">
    <location>
        <position position="100"/>
    </location>
    <ligand>
        <name>L-methionine</name>
        <dbReference type="ChEBI" id="CHEBI:57844"/>
        <note>ligand shared between two neighboring subunits</note>
    </ligand>
</feature>
<feature type="binding site" description="in other chain" evidence="1">
    <location>
        <begin position="175"/>
        <end position="177"/>
    </location>
    <ligand>
        <name>ATP</name>
        <dbReference type="ChEBI" id="CHEBI:30616"/>
        <note>ligand shared between two neighboring subunits</note>
    </ligand>
</feature>
<feature type="binding site" description="in other chain" evidence="1">
    <location>
        <begin position="242"/>
        <end position="243"/>
    </location>
    <ligand>
        <name>ATP</name>
        <dbReference type="ChEBI" id="CHEBI:30616"/>
        <note>ligand shared between two neighboring subunits</note>
    </ligand>
</feature>
<feature type="binding site" evidence="1">
    <location>
        <position position="251"/>
    </location>
    <ligand>
        <name>ATP</name>
        <dbReference type="ChEBI" id="CHEBI:30616"/>
        <note>ligand shared between two neighboring subunits</note>
    </ligand>
</feature>
<feature type="binding site" evidence="1">
    <location>
        <position position="251"/>
    </location>
    <ligand>
        <name>L-methionine</name>
        <dbReference type="ChEBI" id="CHEBI:57844"/>
        <note>ligand shared between two neighboring subunits</note>
    </ligand>
</feature>
<feature type="binding site" description="in other chain" evidence="1">
    <location>
        <begin position="257"/>
        <end position="258"/>
    </location>
    <ligand>
        <name>ATP</name>
        <dbReference type="ChEBI" id="CHEBI:30616"/>
        <note>ligand shared between two neighboring subunits</note>
    </ligand>
</feature>
<feature type="binding site" evidence="1">
    <location>
        <position position="274"/>
    </location>
    <ligand>
        <name>ATP</name>
        <dbReference type="ChEBI" id="CHEBI:30616"/>
        <note>ligand shared between two neighboring subunits</note>
    </ligand>
</feature>
<feature type="binding site" evidence="1">
    <location>
        <position position="278"/>
    </location>
    <ligand>
        <name>ATP</name>
        <dbReference type="ChEBI" id="CHEBI:30616"/>
        <note>ligand shared between two neighboring subunits</note>
    </ligand>
</feature>
<feature type="binding site" description="in other chain" evidence="1">
    <location>
        <position position="282"/>
    </location>
    <ligand>
        <name>L-methionine</name>
        <dbReference type="ChEBI" id="CHEBI:57844"/>
        <note>ligand shared between two neighboring subunits</note>
    </ligand>
</feature>
<sequence length="396" mass="43088">MSERKLFTSESVSEGHPDKIADQISDAILDAILAEDPDAHVAAETAVYTGSVHVFGEISTTAYVDINRVVRDTIAEIGYTKGEYGFSAESVGVHPSLVEQSPDIAQGVNEALETRQDASQDPLDLIGAGDQGLMFGFAVDETPELMPLPISLSHKLVRRLAELRKSGEIAYLRPDAKSQVTVEYDEDNQPVRVDTVVISTQHDPEVSQEQIRQDVIERVIKEIIPAHYLDDQTNYFINPTGRFVIGGPQGDSGLTGRKIIVDTYGGYSRHGGGAFSGKDATKVDRSASYAARYIAKNIVAAGLAKKAEVQLAYAIGVAHPVSVRIDTFGTSTVAESKLEAAVRHIFDLRPAGIIQMLDLKRPIYKQTAAYGHMGRTDIDLPWEKLDKVEALKTAVL</sequence>
<reference key="1">
    <citation type="journal article" date="2007" name="PLoS ONE">
        <title>A glimpse of streptococcal toxic shock syndrome from comparative genomics of S. suis 2 Chinese isolates.</title>
        <authorList>
            <person name="Chen C."/>
            <person name="Tang J."/>
            <person name="Dong W."/>
            <person name="Wang C."/>
            <person name="Feng Y."/>
            <person name="Wang J."/>
            <person name="Zheng F."/>
            <person name="Pan X."/>
            <person name="Liu D."/>
            <person name="Li M."/>
            <person name="Song Y."/>
            <person name="Zhu X."/>
            <person name="Sun H."/>
            <person name="Feng T."/>
            <person name="Guo Z."/>
            <person name="Ju A."/>
            <person name="Ge J."/>
            <person name="Dong Y."/>
            <person name="Sun W."/>
            <person name="Jiang Y."/>
            <person name="Wang J."/>
            <person name="Yan J."/>
            <person name="Yang H."/>
            <person name="Wang X."/>
            <person name="Gao G.F."/>
            <person name="Yang R."/>
            <person name="Wang J."/>
            <person name="Yu J."/>
        </authorList>
    </citation>
    <scope>NUCLEOTIDE SEQUENCE [LARGE SCALE GENOMIC DNA]</scope>
    <source>
        <strain>05ZYH33</strain>
    </source>
</reference>
<protein>
    <recommendedName>
        <fullName evidence="1">S-adenosylmethionine synthase</fullName>
        <shortName evidence="1">AdoMet synthase</shortName>
        <ecNumber evidence="1">2.5.1.6</ecNumber>
    </recommendedName>
    <alternativeName>
        <fullName evidence="1">MAT</fullName>
    </alternativeName>
    <alternativeName>
        <fullName evidence="1">Methionine adenosyltransferase</fullName>
    </alternativeName>
</protein>
<comment type="function">
    <text evidence="1">Catalyzes the formation of S-adenosylmethionine (AdoMet) from methionine and ATP. The overall synthetic reaction is composed of two sequential steps, AdoMet formation and the subsequent tripolyphosphate hydrolysis which occurs prior to release of AdoMet from the enzyme.</text>
</comment>
<comment type="catalytic activity">
    <reaction evidence="1">
        <text>L-methionine + ATP + H2O = S-adenosyl-L-methionine + phosphate + diphosphate</text>
        <dbReference type="Rhea" id="RHEA:21080"/>
        <dbReference type="ChEBI" id="CHEBI:15377"/>
        <dbReference type="ChEBI" id="CHEBI:30616"/>
        <dbReference type="ChEBI" id="CHEBI:33019"/>
        <dbReference type="ChEBI" id="CHEBI:43474"/>
        <dbReference type="ChEBI" id="CHEBI:57844"/>
        <dbReference type="ChEBI" id="CHEBI:59789"/>
        <dbReference type="EC" id="2.5.1.6"/>
    </reaction>
</comment>
<comment type="cofactor">
    <cofactor evidence="1">
        <name>Mg(2+)</name>
        <dbReference type="ChEBI" id="CHEBI:18420"/>
    </cofactor>
    <text evidence="1">Binds 2 divalent ions per subunit.</text>
</comment>
<comment type="cofactor">
    <cofactor evidence="1">
        <name>K(+)</name>
        <dbReference type="ChEBI" id="CHEBI:29103"/>
    </cofactor>
    <text evidence="1">Binds 1 potassium ion per subunit.</text>
</comment>
<comment type="pathway">
    <text evidence="1">Amino-acid biosynthesis; S-adenosyl-L-methionine biosynthesis; S-adenosyl-L-methionine from L-methionine: step 1/1.</text>
</comment>
<comment type="subunit">
    <text evidence="1">Homotetramer; dimer of dimers.</text>
</comment>
<comment type="subcellular location">
    <subcellularLocation>
        <location evidence="1">Cytoplasm</location>
    </subcellularLocation>
</comment>
<comment type="similarity">
    <text evidence="1">Belongs to the AdoMet synthase family.</text>
</comment>
<name>METK_STRSY</name>
<proteinExistence type="inferred from homology"/>
<organism>
    <name type="scientific">Streptococcus suis (strain 05ZYH33)</name>
    <dbReference type="NCBI Taxonomy" id="391295"/>
    <lineage>
        <taxon>Bacteria</taxon>
        <taxon>Bacillati</taxon>
        <taxon>Bacillota</taxon>
        <taxon>Bacilli</taxon>
        <taxon>Lactobacillales</taxon>
        <taxon>Streptococcaceae</taxon>
        <taxon>Streptococcus</taxon>
    </lineage>
</organism>
<evidence type="ECO:0000255" key="1">
    <source>
        <dbReference type="HAMAP-Rule" id="MF_00086"/>
    </source>
</evidence>
<keyword id="KW-0067">ATP-binding</keyword>
<keyword id="KW-0963">Cytoplasm</keyword>
<keyword id="KW-0460">Magnesium</keyword>
<keyword id="KW-0479">Metal-binding</keyword>
<keyword id="KW-0547">Nucleotide-binding</keyword>
<keyword id="KW-0554">One-carbon metabolism</keyword>
<keyword id="KW-0630">Potassium</keyword>
<keyword id="KW-0808">Transferase</keyword>
<dbReference type="EC" id="2.5.1.6" evidence="1"/>
<dbReference type="EMBL" id="CP000407">
    <property type="protein sequence ID" value="ABP90587.1"/>
    <property type="molecule type" value="Genomic_DNA"/>
</dbReference>
<dbReference type="SMR" id="A4VWU8"/>
<dbReference type="STRING" id="391295.SSU05_1621"/>
<dbReference type="KEGG" id="ssu:SSU05_1621"/>
<dbReference type="eggNOG" id="COG0192">
    <property type="taxonomic scope" value="Bacteria"/>
</dbReference>
<dbReference type="HOGENOM" id="CLU_041802_1_1_9"/>
<dbReference type="UniPathway" id="UPA00315">
    <property type="reaction ID" value="UER00080"/>
</dbReference>
<dbReference type="GO" id="GO:0005737">
    <property type="term" value="C:cytoplasm"/>
    <property type="evidence" value="ECO:0007669"/>
    <property type="project" value="UniProtKB-SubCell"/>
</dbReference>
<dbReference type="GO" id="GO:0005524">
    <property type="term" value="F:ATP binding"/>
    <property type="evidence" value="ECO:0007669"/>
    <property type="project" value="UniProtKB-UniRule"/>
</dbReference>
<dbReference type="GO" id="GO:0000287">
    <property type="term" value="F:magnesium ion binding"/>
    <property type="evidence" value="ECO:0007669"/>
    <property type="project" value="UniProtKB-UniRule"/>
</dbReference>
<dbReference type="GO" id="GO:0004478">
    <property type="term" value="F:methionine adenosyltransferase activity"/>
    <property type="evidence" value="ECO:0007669"/>
    <property type="project" value="UniProtKB-UniRule"/>
</dbReference>
<dbReference type="GO" id="GO:0006730">
    <property type="term" value="P:one-carbon metabolic process"/>
    <property type="evidence" value="ECO:0007669"/>
    <property type="project" value="UniProtKB-KW"/>
</dbReference>
<dbReference type="GO" id="GO:0006556">
    <property type="term" value="P:S-adenosylmethionine biosynthetic process"/>
    <property type="evidence" value="ECO:0007669"/>
    <property type="project" value="UniProtKB-UniRule"/>
</dbReference>
<dbReference type="CDD" id="cd18079">
    <property type="entry name" value="S-AdoMet_synt"/>
    <property type="match status" value="1"/>
</dbReference>
<dbReference type="FunFam" id="3.30.300.10:FF:000003">
    <property type="entry name" value="S-adenosylmethionine synthase"/>
    <property type="match status" value="1"/>
</dbReference>
<dbReference type="Gene3D" id="3.30.300.10">
    <property type="match status" value="3"/>
</dbReference>
<dbReference type="HAMAP" id="MF_00086">
    <property type="entry name" value="S_AdoMet_synth1"/>
    <property type="match status" value="1"/>
</dbReference>
<dbReference type="InterPro" id="IPR022631">
    <property type="entry name" value="ADOMET_SYNTHASE_CS"/>
</dbReference>
<dbReference type="InterPro" id="IPR022630">
    <property type="entry name" value="S-AdoMet_synt_C"/>
</dbReference>
<dbReference type="InterPro" id="IPR022629">
    <property type="entry name" value="S-AdoMet_synt_central"/>
</dbReference>
<dbReference type="InterPro" id="IPR022628">
    <property type="entry name" value="S-AdoMet_synt_N"/>
</dbReference>
<dbReference type="InterPro" id="IPR002133">
    <property type="entry name" value="S-AdoMet_synthetase"/>
</dbReference>
<dbReference type="InterPro" id="IPR022636">
    <property type="entry name" value="S-AdoMet_synthetase_sfam"/>
</dbReference>
<dbReference type="NCBIfam" id="TIGR01034">
    <property type="entry name" value="metK"/>
    <property type="match status" value="1"/>
</dbReference>
<dbReference type="PANTHER" id="PTHR11964">
    <property type="entry name" value="S-ADENOSYLMETHIONINE SYNTHETASE"/>
    <property type="match status" value="1"/>
</dbReference>
<dbReference type="Pfam" id="PF02773">
    <property type="entry name" value="S-AdoMet_synt_C"/>
    <property type="match status" value="1"/>
</dbReference>
<dbReference type="Pfam" id="PF02772">
    <property type="entry name" value="S-AdoMet_synt_M"/>
    <property type="match status" value="1"/>
</dbReference>
<dbReference type="Pfam" id="PF00438">
    <property type="entry name" value="S-AdoMet_synt_N"/>
    <property type="match status" value="1"/>
</dbReference>
<dbReference type="PIRSF" id="PIRSF000497">
    <property type="entry name" value="MAT"/>
    <property type="match status" value="1"/>
</dbReference>
<dbReference type="SUPFAM" id="SSF55973">
    <property type="entry name" value="S-adenosylmethionine synthetase"/>
    <property type="match status" value="3"/>
</dbReference>
<dbReference type="PROSITE" id="PS00376">
    <property type="entry name" value="ADOMET_SYNTHASE_1"/>
    <property type="match status" value="1"/>
</dbReference>
<dbReference type="PROSITE" id="PS00377">
    <property type="entry name" value="ADOMET_SYNTHASE_2"/>
    <property type="match status" value="1"/>
</dbReference>